<name>TRPB_LEGPL</name>
<sequence>MIKKELPDEFGHFGPYGGMFVADTLVHALKQLEHAYTKYRNDQDFLSELHTELKDYVGRPNPLYHAVHLSKKIGGAQIYLKREDLNHTGAHKINNTIGQALLAKRMGKTRVIAETGAGQHGVATATVAAKFGFQCVVYMGSEDIKRQSSNVYRMKLLGAEVVPVTSGSKTLKDALNEALRDWVSHVDDTFYIIGTVAGPHPYPQMVRDFQAIIGVEARAQHMEKTGRLPDALVACVGGGSNAIGLFYPFLNDQSVMIYGVEAGGKGIETGEHSASLIAGKPGVLHGNRTYLLCDEYGQVKDTHSVSAGLDYPGVGPEHAYLKDTGRVIYKAINDSEALDAFRLLTHTEGIIPALESSHAVAYAIQLAKTMSKEQSIIVNLSGRGDKDMHTVAAIDGITI</sequence>
<protein>
    <recommendedName>
        <fullName evidence="1">Tryptophan synthase beta chain</fullName>
        <ecNumber evidence="1">4.2.1.20</ecNumber>
    </recommendedName>
</protein>
<feature type="chain" id="PRO_1000076395" description="Tryptophan synthase beta chain">
    <location>
        <begin position="1"/>
        <end position="399"/>
    </location>
</feature>
<feature type="modified residue" description="N6-(pyridoxal phosphate)lysine" evidence="1">
    <location>
        <position position="92"/>
    </location>
</feature>
<evidence type="ECO:0000255" key="1">
    <source>
        <dbReference type="HAMAP-Rule" id="MF_00133"/>
    </source>
</evidence>
<dbReference type="EC" id="4.2.1.20" evidence="1"/>
<dbReference type="EMBL" id="CR628337">
    <property type="protein sequence ID" value="CAH15507.1"/>
    <property type="molecule type" value="Genomic_DNA"/>
</dbReference>
<dbReference type="RefSeq" id="WP_011213615.1">
    <property type="nucleotide sequence ID" value="NC_006369.1"/>
</dbReference>
<dbReference type="SMR" id="Q5WX32"/>
<dbReference type="KEGG" id="lpf:lpl1267"/>
<dbReference type="LegioList" id="lpl1267"/>
<dbReference type="HOGENOM" id="CLU_016734_3_1_6"/>
<dbReference type="UniPathway" id="UPA00035">
    <property type="reaction ID" value="UER00044"/>
</dbReference>
<dbReference type="Proteomes" id="UP000002517">
    <property type="component" value="Chromosome"/>
</dbReference>
<dbReference type="GO" id="GO:0005737">
    <property type="term" value="C:cytoplasm"/>
    <property type="evidence" value="ECO:0007669"/>
    <property type="project" value="TreeGrafter"/>
</dbReference>
<dbReference type="GO" id="GO:0004834">
    <property type="term" value="F:tryptophan synthase activity"/>
    <property type="evidence" value="ECO:0007669"/>
    <property type="project" value="UniProtKB-UniRule"/>
</dbReference>
<dbReference type="CDD" id="cd06446">
    <property type="entry name" value="Trp-synth_B"/>
    <property type="match status" value="1"/>
</dbReference>
<dbReference type="FunFam" id="3.40.50.1100:FF:000001">
    <property type="entry name" value="Tryptophan synthase beta chain"/>
    <property type="match status" value="1"/>
</dbReference>
<dbReference type="FunFam" id="3.40.50.1100:FF:000004">
    <property type="entry name" value="Tryptophan synthase beta chain"/>
    <property type="match status" value="1"/>
</dbReference>
<dbReference type="Gene3D" id="3.40.50.1100">
    <property type="match status" value="2"/>
</dbReference>
<dbReference type="HAMAP" id="MF_00133">
    <property type="entry name" value="Trp_synth_beta"/>
    <property type="match status" value="1"/>
</dbReference>
<dbReference type="InterPro" id="IPR006653">
    <property type="entry name" value="Trp_synth_b_CS"/>
</dbReference>
<dbReference type="InterPro" id="IPR006654">
    <property type="entry name" value="Trp_synth_beta"/>
</dbReference>
<dbReference type="InterPro" id="IPR023026">
    <property type="entry name" value="Trp_synth_beta/beta-like"/>
</dbReference>
<dbReference type="InterPro" id="IPR001926">
    <property type="entry name" value="TrpB-like_PALP"/>
</dbReference>
<dbReference type="InterPro" id="IPR036052">
    <property type="entry name" value="TrpB-like_PALP_sf"/>
</dbReference>
<dbReference type="NCBIfam" id="TIGR00263">
    <property type="entry name" value="trpB"/>
    <property type="match status" value="1"/>
</dbReference>
<dbReference type="PANTHER" id="PTHR48077:SF3">
    <property type="entry name" value="TRYPTOPHAN SYNTHASE"/>
    <property type="match status" value="1"/>
</dbReference>
<dbReference type="PANTHER" id="PTHR48077">
    <property type="entry name" value="TRYPTOPHAN SYNTHASE-RELATED"/>
    <property type="match status" value="1"/>
</dbReference>
<dbReference type="Pfam" id="PF00291">
    <property type="entry name" value="PALP"/>
    <property type="match status" value="1"/>
</dbReference>
<dbReference type="PIRSF" id="PIRSF001413">
    <property type="entry name" value="Trp_syn_beta"/>
    <property type="match status" value="1"/>
</dbReference>
<dbReference type="SUPFAM" id="SSF53686">
    <property type="entry name" value="Tryptophan synthase beta subunit-like PLP-dependent enzymes"/>
    <property type="match status" value="1"/>
</dbReference>
<dbReference type="PROSITE" id="PS00168">
    <property type="entry name" value="TRP_SYNTHASE_BETA"/>
    <property type="match status" value="1"/>
</dbReference>
<reference key="1">
    <citation type="journal article" date="2004" name="Nat. Genet.">
        <title>Evidence in the Legionella pneumophila genome for exploitation of host cell functions and high genome plasticity.</title>
        <authorList>
            <person name="Cazalet C."/>
            <person name="Rusniok C."/>
            <person name="Brueggemann H."/>
            <person name="Zidane N."/>
            <person name="Magnier A."/>
            <person name="Ma L."/>
            <person name="Tichit M."/>
            <person name="Jarraud S."/>
            <person name="Bouchier C."/>
            <person name="Vandenesch F."/>
            <person name="Kunst F."/>
            <person name="Etienne J."/>
            <person name="Glaser P."/>
            <person name="Buchrieser C."/>
        </authorList>
    </citation>
    <scope>NUCLEOTIDE SEQUENCE [LARGE SCALE GENOMIC DNA]</scope>
    <source>
        <strain>Lens</strain>
    </source>
</reference>
<accession>Q5WX32</accession>
<organism>
    <name type="scientific">Legionella pneumophila (strain Lens)</name>
    <dbReference type="NCBI Taxonomy" id="297245"/>
    <lineage>
        <taxon>Bacteria</taxon>
        <taxon>Pseudomonadati</taxon>
        <taxon>Pseudomonadota</taxon>
        <taxon>Gammaproteobacteria</taxon>
        <taxon>Legionellales</taxon>
        <taxon>Legionellaceae</taxon>
        <taxon>Legionella</taxon>
    </lineage>
</organism>
<proteinExistence type="inferred from homology"/>
<keyword id="KW-0028">Amino-acid biosynthesis</keyword>
<keyword id="KW-0057">Aromatic amino acid biosynthesis</keyword>
<keyword id="KW-0456">Lyase</keyword>
<keyword id="KW-0663">Pyridoxal phosphate</keyword>
<keyword id="KW-0822">Tryptophan biosynthesis</keyword>
<gene>
    <name evidence="1" type="primary">trpB</name>
    <name type="ordered locus">lpl1267</name>
</gene>
<comment type="function">
    <text evidence="1">The beta subunit is responsible for the synthesis of L-tryptophan from indole and L-serine.</text>
</comment>
<comment type="catalytic activity">
    <reaction evidence="1">
        <text>(1S,2R)-1-C-(indol-3-yl)glycerol 3-phosphate + L-serine = D-glyceraldehyde 3-phosphate + L-tryptophan + H2O</text>
        <dbReference type="Rhea" id="RHEA:10532"/>
        <dbReference type="ChEBI" id="CHEBI:15377"/>
        <dbReference type="ChEBI" id="CHEBI:33384"/>
        <dbReference type="ChEBI" id="CHEBI:57912"/>
        <dbReference type="ChEBI" id="CHEBI:58866"/>
        <dbReference type="ChEBI" id="CHEBI:59776"/>
        <dbReference type="EC" id="4.2.1.20"/>
    </reaction>
</comment>
<comment type="cofactor">
    <cofactor evidence="1">
        <name>pyridoxal 5'-phosphate</name>
        <dbReference type="ChEBI" id="CHEBI:597326"/>
    </cofactor>
</comment>
<comment type="pathway">
    <text evidence="1">Amino-acid biosynthesis; L-tryptophan biosynthesis; L-tryptophan from chorismate: step 5/5.</text>
</comment>
<comment type="subunit">
    <text evidence="1">Tetramer of two alpha and two beta chains.</text>
</comment>
<comment type="similarity">
    <text evidence="1">Belongs to the TrpB family.</text>
</comment>